<protein>
    <recommendedName>
        <fullName evidence="1">Ribosomal RNA small subunit methyltransferase A</fullName>
        <ecNumber evidence="1">2.1.1.182</ecNumber>
    </recommendedName>
    <alternativeName>
        <fullName evidence="1">16S rRNA (adenine(1518)-N(6)/adenine(1519)-N(6))-dimethyltransferase</fullName>
    </alternativeName>
    <alternativeName>
        <fullName evidence="1">16S rRNA dimethyladenosine transferase</fullName>
    </alternativeName>
    <alternativeName>
        <fullName evidence="1">16S rRNA dimethylase</fullName>
    </alternativeName>
    <alternativeName>
        <fullName evidence="1">S-adenosylmethionine-6-N', N'-adenosyl(rRNA) dimethyltransferase</fullName>
    </alternativeName>
</protein>
<reference key="1">
    <citation type="journal article" date="2003" name="DNA Res.">
        <title>Complete genome structure of Gloeobacter violaceus PCC 7421, a cyanobacterium that lacks thylakoids.</title>
        <authorList>
            <person name="Nakamura Y."/>
            <person name="Kaneko T."/>
            <person name="Sato S."/>
            <person name="Mimuro M."/>
            <person name="Miyashita H."/>
            <person name="Tsuchiya T."/>
            <person name="Sasamoto S."/>
            <person name="Watanabe A."/>
            <person name="Kawashima K."/>
            <person name="Kishida Y."/>
            <person name="Kiyokawa C."/>
            <person name="Kohara M."/>
            <person name="Matsumoto M."/>
            <person name="Matsuno A."/>
            <person name="Nakazaki N."/>
            <person name="Shimpo S."/>
            <person name="Takeuchi C."/>
            <person name="Yamada M."/>
            <person name="Tabata S."/>
        </authorList>
    </citation>
    <scope>NUCLEOTIDE SEQUENCE [LARGE SCALE GENOMIC DNA]</scope>
    <source>
        <strain>ATCC 29082 / PCC 7421</strain>
    </source>
</reference>
<proteinExistence type="inferred from homology"/>
<organism>
    <name type="scientific">Gloeobacter violaceus (strain ATCC 29082 / PCC 7421)</name>
    <dbReference type="NCBI Taxonomy" id="251221"/>
    <lineage>
        <taxon>Bacteria</taxon>
        <taxon>Bacillati</taxon>
        <taxon>Cyanobacteriota</taxon>
        <taxon>Cyanophyceae</taxon>
        <taxon>Gloeobacterales</taxon>
        <taxon>Gloeobacteraceae</taxon>
        <taxon>Gloeobacter</taxon>
    </lineage>
</organism>
<feature type="chain" id="PRO_0000101535" description="Ribosomal RNA small subunit methyltransferase A">
    <location>
        <begin position="1"/>
        <end position="272"/>
    </location>
</feature>
<feature type="binding site" evidence="1">
    <location>
        <position position="10"/>
    </location>
    <ligand>
        <name>S-adenosyl-L-methionine</name>
        <dbReference type="ChEBI" id="CHEBI:59789"/>
    </ligand>
</feature>
<feature type="binding site" evidence="1">
    <location>
        <position position="12"/>
    </location>
    <ligand>
        <name>S-adenosyl-L-methionine</name>
        <dbReference type="ChEBI" id="CHEBI:59789"/>
    </ligand>
</feature>
<feature type="binding site" evidence="1">
    <location>
        <position position="37"/>
    </location>
    <ligand>
        <name>S-adenosyl-L-methionine</name>
        <dbReference type="ChEBI" id="CHEBI:59789"/>
    </ligand>
</feature>
<feature type="binding site" evidence="1">
    <location>
        <position position="57"/>
    </location>
    <ligand>
        <name>S-adenosyl-L-methionine</name>
        <dbReference type="ChEBI" id="CHEBI:59789"/>
    </ligand>
</feature>
<feature type="binding site" evidence="1">
    <location>
        <position position="82"/>
    </location>
    <ligand>
        <name>S-adenosyl-L-methionine</name>
        <dbReference type="ChEBI" id="CHEBI:59789"/>
    </ligand>
</feature>
<feature type="binding site" evidence="1">
    <location>
        <position position="98"/>
    </location>
    <ligand>
        <name>S-adenosyl-L-methionine</name>
        <dbReference type="ChEBI" id="CHEBI:59789"/>
    </ligand>
</feature>
<keyword id="KW-0963">Cytoplasm</keyword>
<keyword id="KW-0489">Methyltransferase</keyword>
<keyword id="KW-1185">Reference proteome</keyword>
<keyword id="KW-0694">RNA-binding</keyword>
<keyword id="KW-0698">rRNA processing</keyword>
<keyword id="KW-0949">S-adenosyl-L-methionine</keyword>
<keyword id="KW-0808">Transferase</keyword>
<comment type="function">
    <text evidence="1">Specifically dimethylates two adjacent adenosines (A1518 and A1519) in the loop of a conserved hairpin near the 3'-end of 16S rRNA in the 30S particle. May play a critical role in biogenesis of 30S subunits.</text>
</comment>
<comment type="catalytic activity">
    <reaction evidence="1">
        <text>adenosine(1518)/adenosine(1519) in 16S rRNA + 4 S-adenosyl-L-methionine = N(6)-dimethyladenosine(1518)/N(6)-dimethyladenosine(1519) in 16S rRNA + 4 S-adenosyl-L-homocysteine + 4 H(+)</text>
        <dbReference type="Rhea" id="RHEA:19609"/>
        <dbReference type="Rhea" id="RHEA-COMP:10232"/>
        <dbReference type="Rhea" id="RHEA-COMP:10233"/>
        <dbReference type="ChEBI" id="CHEBI:15378"/>
        <dbReference type="ChEBI" id="CHEBI:57856"/>
        <dbReference type="ChEBI" id="CHEBI:59789"/>
        <dbReference type="ChEBI" id="CHEBI:74411"/>
        <dbReference type="ChEBI" id="CHEBI:74493"/>
        <dbReference type="EC" id="2.1.1.182"/>
    </reaction>
</comment>
<comment type="subcellular location">
    <subcellularLocation>
        <location evidence="1">Cytoplasm</location>
    </subcellularLocation>
</comment>
<comment type="similarity">
    <text evidence="1">Belongs to the class I-like SAM-binding methyltransferase superfamily. rRNA adenine N(6)-methyltransferase family. RsmA subfamily.</text>
</comment>
<gene>
    <name evidence="1" type="primary">rsmA</name>
    <name evidence="1" type="synonym">ksgA</name>
    <name type="ordered locus">gll1991</name>
</gene>
<sequence length="272" mass="29810">MYTLKRFGQHWLNDGAVLDRIVAAAGLACGDRVLEIGPGLGSLTARLLRQVPVVAVEIDRRAVAQLQRQFGGDKRFVLVEGDILREALPEPANVVVANIPYNISGPILAKLTGSLAQPIRRFRTIVLLVQKELGQRIAAPPGSRTYGALSVRLQYLAECELLFEVPSHCFTPPPKVDSAVIRLTPRPFALQADDPAHLDALVTRAFATRRKMLKNCLKGWVETEKLLAAFASLDISPDARAEDLSVERFVQLSNRLAESDYPSGAARGDRRA</sequence>
<accession>Q7NJ41</accession>
<dbReference type="EC" id="2.1.1.182" evidence="1"/>
<dbReference type="EMBL" id="BA000045">
    <property type="protein sequence ID" value="BAC89932.1"/>
    <property type="molecule type" value="Genomic_DNA"/>
</dbReference>
<dbReference type="RefSeq" id="NP_924937.1">
    <property type="nucleotide sequence ID" value="NC_005125.1"/>
</dbReference>
<dbReference type="RefSeq" id="WP_011141989.1">
    <property type="nucleotide sequence ID" value="NC_005125.1"/>
</dbReference>
<dbReference type="SMR" id="Q7NJ41"/>
<dbReference type="FunCoup" id="Q7NJ41">
    <property type="interactions" value="246"/>
</dbReference>
<dbReference type="STRING" id="251221.gene:10759483"/>
<dbReference type="EnsemblBacteria" id="BAC89932">
    <property type="protein sequence ID" value="BAC89932"/>
    <property type="gene ID" value="BAC89932"/>
</dbReference>
<dbReference type="KEGG" id="gvi:gll1991"/>
<dbReference type="PATRIC" id="fig|251221.4.peg.2023"/>
<dbReference type="eggNOG" id="COG0030">
    <property type="taxonomic scope" value="Bacteria"/>
</dbReference>
<dbReference type="HOGENOM" id="CLU_041220_0_1_3"/>
<dbReference type="InParanoid" id="Q7NJ41"/>
<dbReference type="OrthoDB" id="9814755at2"/>
<dbReference type="PhylomeDB" id="Q7NJ41"/>
<dbReference type="Proteomes" id="UP000000557">
    <property type="component" value="Chromosome"/>
</dbReference>
<dbReference type="GO" id="GO:0005829">
    <property type="term" value="C:cytosol"/>
    <property type="evidence" value="ECO:0000318"/>
    <property type="project" value="GO_Central"/>
</dbReference>
<dbReference type="GO" id="GO:0052908">
    <property type="term" value="F:16S rRNA (adenine(1518)-N(6)/adenine(1519)-N(6))-dimethyltransferase activity"/>
    <property type="evidence" value="ECO:0007669"/>
    <property type="project" value="UniProtKB-EC"/>
</dbReference>
<dbReference type="GO" id="GO:0003723">
    <property type="term" value="F:RNA binding"/>
    <property type="evidence" value="ECO:0007669"/>
    <property type="project" value="UniProtKB-KW"/>
</dbReference>
<dbReference type="GO" id="GO:0000179">
    <property type="term" value="F:rRNA (adenine-N6,N6-)-dimethyltransferase activity"/>
    <property type="evidence" value="ECO:0000318"/>
    <property type="project" value="GO_Central"/>
</dbReference>
<dbReference type="GO" id="GO:0031167">
    <property type="term" value="P:rRNA methylation"/>
    <property type="evidence" value="ECO:0000318"/>
    <property type="project" value="GO_Central"/>
</dbReference>
<dbReference type="CDD" id="cd02440">
    <property type="entry name" value="AdoMet_MTases"/>
    <property type="match status" value="1"/>
</dbReference>
<dbReference type="FunFam" id="1.10.8.100:FF:000001">
    <property type="entry name" value="Ribosomal RNA small subunit methyltransferase A"/>
    <property type="match status" value="1"/>
</dbReference>
<dbReference type="Gene3D" id="1.10.8.100">
    <property type="entry name" value="Ribosomal RNA adenine dimethylase-like, domain 2"/>
    <property type="match status" value="1"/>
</dbReference>
<dbReference type="Gene3D" id="3.40.50.150">
    <property type="entry name" value="Vaccinia Virus protein VP39"/>
    <property type="match status" value="1"/>
</dbReference>
<dbReference type="HAMAP" id="MF_00607">
    <property type="entry name" value="16SrRNA_methyltr_A"/>
    <property type="match status" value="1"/>
</dbReference>
<dbReference type="InterPro" id="IPR001737">
    <property type="entry name" value="KsgA/Erm"/>
</dbReference>
<dbReference type="InterPro" id="IPR023165">
    <property type="entry name" value="rRNA_Ade_diMease-like_C"/>
</dbReference>
<dbReference type="InterPro" id="IPR020596">
    <property type="entry name" value="rRNA_Ade_Mease_Trfase_CS"/>
</dbReference>
<dbReference type="InterPro" id="IPR020598">
    <property type="entry name" value="rRNA_Ade_methylase_Trfase_N"/>
</dbReference>
<dbReference type="InterPro" id="IPR011530">
    <property type="entry name" value="rRNA_adenine_dimethylase"/>
</dbReference>
<dbReference type="InterPro" id="IPR029063">
    <property type="entry name" value="SAM-dependent_MTases_sf"/>
</dbReference>
<dbReference type="NCBIfam" id="TIGR00755">
    <property type="entry name" value="ksgA"/>
    <property type="match status" value="1"/>
</dbReference>
<dbReference type="PANTHER" id="PTHR11727">
    <property type="entry name" value="DIMETHYLADENOSINE TRANSFERASE"/>
    <property type="match status" value="1"/>
</dbReference>
<dbReference type="PANTHER" id="PTHR11727:SF7">
    <property type="entry name" value="DIMETHYLADENOSINE TRANSFERASE-RELATED"/>
    <property type="match status" value="1"/>
</dbReference>
<dbReference type="Pfam" id="PF00398">
    <property type="entry name" value="RrnaAD"/>
    <property type="match status" value="1"/>
</dbReference>
<dbReference type="SMART" id="SM00650">
    <property type="entry name" value="rADc"/>
    <property type="match status" value="1"/>
</dbReference>
<dbReference type="SUPFAM" id="SSF53335">
    <property type="entry name" value="S-adenosyl-L-methionine-dependent methyltransferases"/>
    <property type="match status" value="1"/>
</dbReference>
<dbReference type="PROSITE" id="PS01131">
    <property type="entry name" value="RRNA_A_DIMETH"/>
    <property type="match status" value="1"/>
</dbReference>
<dbReference type="PROSITE" id="PS51689">
    <property type="entry name" value="SAM_RNA_A_N6_MT"/>
    <property type="match status" value="1"/>
</dbReference>
<name>RSMA_GLOVI</name>
<evidence type="ECO:0000255" key="1">
    <source>
        <dbReference type="HAMAP-Rule" id="MF_00607"/>
    </source>
</evidence>